<name>EMR1_YEAST</name>
<feature type="chain" id="PRO_0000245410" description="ERMES regulator 1">
    <location>
        <begin position="1"/>
        <end position="52"/>
    </location>
</feature>
<feature type="topological domain" description="Mitochondrial intermembrane" evidence="1">
    <location>
        <begin position="1"/>
        <end position="27"/>
    </location>
</feature>
<feature type="transmembrane region" description="Helical" evidence="2">
    <location>
        <begin position="28"/>
        <end position="46"/>
    </location>
</feature>
<feature type="topological domain" description="Cytoplasmic" evidence="1">
    <location>
        <begin position="47"/>
        <end position="52"/>
    </location>
</feature>
<comment type="function">
    <text evidence="1">Mediates the formation of endoplasmic reticulum (ER)-mitochondria encounter structure (ERMES) foci, thereby contributing to the formation of ER-mitochondrial contact sites.</text>
</comment>
<comment type="subcellular location">
    <subcellularLocation>
        <location evidence="3">Mitochondrion outer membrane</location>
        <topology evidence="1">Single-pass type III membrane protein</topology>
    </subcellularLocation>
</comment>
<comment type="similarity">
    <text evidence="4">Belongs to the EMR1 family.</text>
</comment>
<protein>
    <recommendedName>
        <fullName evidence="4">ERMES regulator 1</fullName>
    </recommendedName>
</protein>
<accession>Q3E828</accession>
<accession>D6VW58</accession>
<keyword id="KW-0472">Membrane</keyword>
<keyword id="KW-0496">Mitochondrion</keyword>
<keyword id="KW-1000">Mitochondrion outer membrane</keyword>
<keyword id="KW-1185">Reference proteome</keyword>
<keyword id="KW-0812">Transmembrane</keyword>
<keyword id="KW-1133">Transmembrane helix</keyword>
<reference key="1">
    <citation type="journal article" date="1996" name="EMBO J.">
        <title>Complete nucleotide sequence of Saccharomyces cerevisiae chromosome X.</title>
        <authorList>
            <person name="Galibert F."/>
            <person name="Alexandraki D."/>
            <person name="Baur A."/>
            <person name="Boles E."/>
            <person name="Chalwatzis N."/>
            <person name="Chuat J.-C."/>
            <person name="Coster F."/>
            <person name="Cziepluch C."/>
            <person name="de Haan M."/>
            <person name="Domdey H."/>
            <person name="Durand P."/>
            <person name="Entian K.-D."/>
            <person name="Gatius M."/>
            <person name="Goffeau A."/>
            <person name="Grivell L.A."/>
            <person name="Hennemann A."/>
            <person name="Herbert C.J."/>
            <person name="Heumann K."/>
            <person name="Hilger F."/>
            <person name="Hollenberg C.P."/>
            <person name="Huang M.-E."/>
            <person name="Jacq C."/>
            <person name="Jauniaux J.-C."/>
            <person name="Katsoulou C."/>
            <person name="Kirchrath L."/>
            <person name="Kleine K."/>
            <person name="Kordes E."/>
            <person name="Koetter P."/>
            <person name="Liebl S."/>
            <person name="Louis E.J."/>
            <person name="Manus V."/>
            <person name="Mewes H.-W."/>
            <person name="Miosga T."/>
            <person name="Obermaier B."/>
            <person name="Perea J."/>
            <person name="Pohl T.M."/>
            <person name="Portetelle D."/>
            <person name="Pujol A."/>
            <person name="Purnelle B."/>
            <person name="Ramezani Rad M."/>
            <person name="Rasmussen S.W."/>
            <person name="Rose M."/>
            <person name="Rossau R."/>
            <person name="Schaaff-Gerstenschlaeger I."/>
            <person name="Smits P.H.M."/>
            <person name="Scarcez T."/>
            <person name="Soriano N."/>
            <person name="To Van D."/>
            <person name="Tzermia M."/>
            <person name="Van Broekhoven A."/>
            <person name="Vandenbol M."/>
            <person name="Wedler H."/>
            <person name="von Wettstein D."/>
            <person name="Wambutt R."/>
            <person name="Zagulski M."/>
            <person name="Zollner A."/>
            <person name="Karpfinger-Hartl L."/>
        </authorList>
    </citation>
    <scope>NUCLEOTIDE SEQUENCE [LARGE SCALE GENOMIC DNA]</scope>
    <source>
        <strain>ATCC 204508 / S288c</strain>
    </source>
</reference>
<reference key="2">
    <citation type="journal article" date="2014" name="G3 (Bethesda)">
        <title>The reference genome sequence of Saccharomyces cerevisiae: Then and now.</title>
        <authorList>
            <person name="Engel S.R."/>
            <person name="Dietrich F.S."/>
            <person name="Fisk D.G."/>
            <person name="Binkley G."/>
            <person name="Balakrishnan R."/>
            <person name="Costanzo M.C."/>
            <person name="Dwight S.S."/>
            <person name="Hitz B.C."/>
            <person name="Karra K."/>
            <person name="Nash R.S."/>
            <person name="Weng S."/>
            <person name="Wong E.D."/>
            <person name="Lloyd P."/>
            <person name="Skrzypek M.S."/>
            <person name="Miyasato S.R."/>
            <person name="Simison M."/>
            <person name="Cherry J.M."/>
        </authorList>
    </citation>
    <scope>GENOME REANNOTATION</scope>
    <source>
        <strain>ATCC 204508 / S288c</strain>
    </source>
</reference>
<reference key="3">
    <citation type="journal article" date="2003" name="Genome Biol.">
        <title>Reinvestigation of the Saccharomyces cerevisiae genome annotation by comparison to the genome of a related fungus: Ashbya gossypii.</title>
        <authorList>
            <person name="Brachat S."/>
            <person name="Dietrich F.S."/>
            <person name="Voegeli S."/>
            <person name="Zhang Z."/>
            <person name="Stuart L."/>
            <person name="Lerch A."/>
            <person name="Gates K."/>
            <person name="Gaffney T.D."/>
            <person name="Philippsen P."/>
        </authorList>
    </citation>
    <scope>GENOME REANNOTATION</scope>
</reference>
<reference key="4">
    <citation type="journal article" date="2016" name="Nat. Methods">
        <title>One library to make them all: streamlining the creation of yeast libraries via a SWAp-Tag strategy.</title>
        <authorList>
            <person name="Yofe I."/>
            <person name="Weill U."/>
            <person name="Meurer M."/>
            <person name="Chuartzman S."/>
            <person name="Zalckvar E."/>
            <person name="Goldman O."/>
            <person name="Ben-Dor S."/>
            <person name="Schuetze C."/>
            <person name="Wiedemann N."/>
            <person name="Knop M."/>
            <person name="Khmelinskii A."/>
            <person name="Schuldiner M."/>
        </authorList>
    </citation>
    <scope>SUBCELLULAR LOCATION [LARGE SCALE ANALYSIS]</scope>
</reference>
<evidence type="ECO:0000250" key="1">
    <source>
        <dbReference type="UniProtKB" id="Q4ZGE1"/>
    </source>
</evidence>
<evidence type="ECO:0000255" key="2"/>
<evidence type="ECO:0000269" key="3">
    <source>
    </source>
</evidence>
<evidence type="ECO:0000305" key="4"/>
<evidence type="ECO:0000312" key="5">
    <source>
        <dbReference type="SGD" id="S000028522"/>
    </source>
</evidence>
<proteinExistence type="inferred from homology"/>
<dbReference type="EMBL" id="Z49402">
    <property type="status" value="NOT_ANNOTATED_CDS"/>
    <property type="molecule type" value="Genomic_DNA"/>
</dbReference>
<dbReference type="EMBL" id="BK006943">
    <property type="protein sequence ID" value="DAA08674.1"/>
    <property type="molecule type" value="Genomic_DNA"/>
</dbReference>
<dbReference type="RefSeq" id="NP_878103.1">
    <property type="nucleotide sequence ID" value="NM_001184532.1"/>
</dbReference>
<dbReference type="BioGRID" id="37008">
    <property type="interactions" value="44"/>
</dbReference>
<dbReference type="FunCoup" id="Q3E828">
    <property type="interactions" value="11"/>
</dbReference>
<dbReference type="STRING" id="4932.YJL127C-B"/>
<dbReference type="PaxDb" id="4932-YJL127C-B"/>
<dbReference type="PeptideAtlas" id="Q3E828"/>
<dbReference type="EnsemblFungi" id="YJL127C-B_mRNA">
    <property type="protein sequence ID" value="YJL127C-B"/>
    <property type="gene ID" value="YJL127C-B"/>
</dbReference>
<dbReference type="GeneID" id="1466466"/>
<dbReference type="KEGG" id="sce:YJL127C-B"/>
<dbReference type="AGR" id="SGD:S000028522"/>
<dbReference type="SGD" id="S000028522">
    <property type="gene designation" value="MCO6"/>
</dbReference>
<dbReference type="VEuPathDB" id="FungiDB:YJL127C-B"/>
<dbReference type="eggNOG" id="ENOG502SBQD">
    <property type="taxonomic scope" value="Eukaryota"/>
</dbReference>
<dbReference type="HOGENOM" id="CLU_3088968_0_0_1"/>
<dbReference type="InParanoid" id="Q3E828"/>
<dbReference type="OMA" id="NIFVESH"/>
<dbReference type="OrthoDB" id="2122015at2759"/>
<dbReference type="BioCyc" id="YEAST:G3O-31804-MONOMER"/>
<dbReference type="BioGRID-ORCS" id="1466466">
    <property type="hits" value="1 hit in 10 CRISPR screens"/>
</dbReference>
<dbReference type="PRO" id="PR:Q3E828"/>
<dbReference type="Proteomes" id="UP000002311">
    <property type="component" value="Chromosome X"/>
</dbReference>
<dbReference type="RNAct" id="Q3E828">
    <property type="molecule type" value="protein"/>
</dbReference>
<dbReference type="GO" id="GO:0005741">
    <property type="term" value="C:mitochondrial outer membrane"/>
    <property type="evidence" value="ECO:0007005"/>
    <property type="project" value="SGD"/>
</dbReference>
<dbReference type="GO" id="GO:0005739">
    <property type="term" value="C:mitochondrion"/>
    <property type="evidence" value="ECO:0007005"/>
    <property type="project" value="SGD"/>
</dbReference>
<dbReference type="GO" id="GO:0001401">
    <property type="term" value="C:SAM complex"/>
    <property type="evidence" value="ECO:0000314"/>
    <property type="project" value="SGD"/>
</dbReference>
<dbReference type="GO" id="GO:0070096">
    <property type="term" value="P:mitochondrial outer membrane translocase complex assembly"/>
    <property type="evidence" value="ECO:0000315"/>
    <property type="project" value="SGD"/>
</dbReference>
<dbReference type="InterPro" id="IPR035195">
    <property type="entry name" value="Emr1"/>
</dbReference>
<dbReference type="Pfam" id="PF17237">
    <property type="entry name" value="Emr1"/>
    <property type="match status" value="1"/>
</dbReference>
<gene>
    <name evidence="5" type="primary">MCO6</name>
    <name evidence="5" type="ordered locus">YJL127C-B</name>
</gene>
<organism>
    <name type="scientific">Saccharomyces cerevisiae (strain ATCC 204508 / S288c)</name>
    <name type="common">Baker's yeast</name>
    <dbReference type="NCBI Taxonomy" id="559292"/>
    <lineage>
        <taxon>Eukaryota</taxon>
        <taxon>Fungi</taxon>
        <taxon>Dikarya</taxon>
        <taxon>Ascomycota</taxon>
        <taxon>Saccharomycotina</taxon>
        <taxon>Saccharomycetes</taxon>
        <taxon>Saccharomycetales</taxon>
        <taxon>Saccharomycetaceae</taxon>
        <taxon>Saccharomyces</taxon>
    </lineage>
</organism>
<sequence length="52" mass="6017">MIFFFNQIRSIFTALHTPTQQIQLSRRAFFQFLGYLGSCVVISLAAQSKYVQ</sequence>